<accession>C3LIS3</accession>
<comment type="function">
    <text evidence="1">Participates in chromosomal partition during cell division. May act via the formation of a condensin-like complex containing Smc and ScpB that pull DNA away from mid-cell into both cell halves.</text>
</comment>
<comment type="subunit">
    <text evidence="1">Component of a cohesin-like complex composed of ScpA, ScpB and the Smc homodimer, in which ScpA and ScpB bind to the head domain of Smc. The presence of the three proteins is required for the association of the complex with DNA.</text>
</comment>
<comment type="subcellular location">
    <subcellularLocation>
        <location evidence="1">Cytoplasm</location>
    </subcellularLocation>
    <text evidence="1">Associated with two foci at the outer edges of the nucleoid region in young cells, and at four foci within both cell halves in older cells.</text>
</comment>
<comment type="similarity">
    <text evidence="1">Belongs to the ScpA family.</text>
</comment>
<name>SCPA_BACAC</name>
<keyword id="KW-0131">Cell cycle</keyword>
<keyword id="KW-0132">Cell division</keyword>
<keyword id="KW-0159">Chromosome partition</keyword>
<keyword id="KW-0963">Cytoplasm</keyword>
<reference key="1">
    <citation type="submission" date="2008-10" db="EMBL/GenBank/DDBJ databases">
        <title>Genome sequence of Bacillus anthracis str. CDC 684.</title>
        <authorList>
            <person name="Dodson R.J."/>
            <person name="Munk A.C."/>
            <person name="Brettin T."/>
            <person name="Bruce D."/>
            <person name="Detter C."/>
            <person name="Tapia R."/>
            <person name="Han C."/>
            <person name="Sutton G."/>
            <person name="Sims D."/>
        </authorList>
    </citation>
    <scope>NUCLEOTIDE SEQUENCE [LARGE SCALE GENOMIC DNA]</scope>
    <source>
        <strain>CDC 684 / NRRL 3495</strain>
    </source>
</reference>
<organism>
    <name type="scientific">Bacillus anthracis (strain CDC 684 / NRRL 3495)</name>
    <dbReference type="NCBI Taxonomy" id="568206"/>
    <lineage>
        <taxon>Bacteria</taxon>
        <taxon>Bacillati</taxon>
        <taxon>Bacillota</taxon>
        <taxon>Bacilli</taxon>
        <taxon>Bacillales</taxon>
        <taxon>Bacillaceae</taxon>
        <taxon>Bacillus</taxon>
        <taxon>Bacillus cereus group</taxon>
    </lineage>
</organism>
<proteinExistence type="inferred from homology"/>
<sequence>MQYNFKVEAFEGPLDLLLHLIHRYEIDIYNIPVAEITEQYLSYVHTMKELQLDVASEYLVMAATLLQIKSKMLLPKHEEDVLDNGDDFIDDPRQELMERLIEYKKYKQVATELKEREQERAQLYTRPPIDFTSLQQEEETNLPLDVTLYDMLAAFQKLMRRKKAEKPVTTRITRQEIPIEQRMTDILKQLEIQGGRQSFYDLFVDDEREIMVVTFLAVLELMKNQQIIIEQEHNFDEIFVSSYTKSA</sequence>
<dbReference type="EMBL" id="CP001215">
    <property type="protein sequence ID" value="ACP15620.1"/>
    <property type="molecule type" value="Genomic_DNA"/>
</dbReference>
<dbReference type="RefSeq" id="WP_001199756.1">
    <property type="nucleotide sequence ID" value="NC_012581.1"/>
</dbReference>
<dbReference type="SMR" id="C3LIS3"/>
<dbReference type="GeneID" id="45023947"/>
<dbReference type="KEGG" id="bah:BAMEG_4318"/>
<dbReference type="HOGENOM" id="CLU_038686_3_1_9"/>
<dbReference type="GO" id="GO:0005737">
    <property type="term" value="C:cytoplasm"/>
    <property type="evidence" value="ECO:0007669"/>
    <property type="project" value="UniProtKB-SubCell"/>
</dbReference>
<dbReference type="GO" id="GO:0051301">
    <property type="term" value="P:cell division"/>
    <property type="evidence" value="ECO:0007669"/>
    <property type="project" value="UniProtKB-KW"/>
</dbReference>
<dbReference type="GO" id="GO:0007059">
    <property type="term" value="P:chromosome segregation"/>
    <property type="evidence" value="ECO:0007669"/>
    <property type="project" value="UniProtKB-UniRule"/>
</dbReference>
<dbReference type="GO" id="GO:0006260">
    <property type="term" value="P:DNA replication"/>
    <property type="evidence" value="ECO:0007669"/>
    <property type="project" value="UniProtKB-UniRule"/>
</dbReference>
<dbReference type="Gene3D" id="6.10.250.2410">
    <property type="match status" value="1"/>
</dbReference>
<dbReference type="Gene3D" id="1.10.10.580">
    <property type="entry name" value="Structural maintenance of chromosome 1. Chain E"/>
    <property type="match status" value="1"/>
</dbReference>
<dbReference type="HAMAP" id="MF_01805">
    <property type="entry name" value="ScpA"/>
    <property type="match status" value="1"/>
</dbReference>
<dbReference type="InterPro" id="IPR003768">
    <property type="entry name" value="ScpA"/>
</dbReference>
<dbReference type="InterPro" id="IPR023093">
    <property type="entry name" value="ScpA-like_C"/>
</dbReference>
<dbReference type="NCBIfam" id="NF000992">
    <property type="entry name" value="PRK00104.1-1"/>
    <property type="match status" value="1"/>
</dbReference>
<dbReference type="NCBIfam" id="NF000995">
    <property type="entry name" value="PRK00104.1-4"/>
    <property type="match status" value="1"/>
</dbReference>
<dbReference type="PANTHER" id="PTHR33969">
    <property type="entry name" value="SEGREGATION AND CONDENSATION PROTEIN A"/>
    <property type="match status" value="1"/>
</dbReference>
<dbReference type="PANTHER" id="PTHR33969:SF2">
    <property type="entry name" value="SEGREGATION AND CONDENSATION PROTEIN A"/>
    <property type="match status" value="1"/>
</dbReference>
<dbReference type="Pfam" id="PF02616">
    <property type="entry name" value="SMC_ScpA"/>
    <property type="match status" value="1"/>
</dbReference>
<feature type="chain" id="PRO_1000187549" description="Segregation and condensation protein A">
    <location>
        <begin position="1"/>
        <end position="247"/>
    </location>
</feature>
<protein>
    <recommendedName>
        <fullName evidence="1">Segregation and condensation protein A</fullName>
    </recommendedName>
</protein>
<gene>
    <name evidence="1" type="primary">scpA</name>
    <name type="ordered locus">BAMEG_4318</name>
</gene>
<evidence type="ECO:0000255" key="1">
    <source>
        <dbReference type="HAMAP-Rule" id="MF_01805"/>
    </source>
</evidence>